<reference key="1">
    <citation type="submission" date="2006-02" db="EMBL/GenBank/DDBJ databases">
        <title>Complete sequence of chromosome of Jannaschia sp. CCS1.</title>
        <authorList>
            <consortium name="US DOE Joint Genome Institute"/>
            <person name="Copeland A."/>
            <person name="Lucas S."/>
            <person name="Lapidus A."/>
            <person name="Barry K."/>
            <person name="Detter J.C."/>
            <person name="Glavina del Rio T."/>
            <person name="Hammon N."/>
            <person name="Israni S."/>
            <person name="Pitluck S."/>
            <person name="Brettin T."/>
            <person name="Bruce D."/>
            <person name="Han C."/>
            <person name="Tapia R."/>
            <person name="Gilna P."/>
            <person name="Chertkov O."/>
            <person name="Saunders E."/>
            <person name="Schmutz J."/>
            <person name="Larimer F."/>
            <person name="Land M."/>
            <person name="Kyrpides N."/>
            <person name="Lykidis A."/>
            <person name="Moran M.A."/>
            <person name="Belas R."/>
            <person name="Ye W."/>
            <person name="Buchan A."/>
            <person name="Gonzalez J.M."/>
            <person name="Schell M.A."/>
            <person name="Richardson P."/>
        </authorList>
    </citation>
    <scope>NUCLEOTIDE SEQUENCE [LARGE SCALE GENOMIC DNA]</scope>
    <source>
        <strain>CCS1</strain>
    </source>
</reference>
<feature type="chain" id="PRO_1000020081" description="Methionyl-tRNA formyltransferase">
    <location>
        <begin position="1"/>
        <end position="301"/>
    </location>
</feature>
<feature type="binding site" evidence="1">
    <location>
        <begin position="109"/>
        <end position="112"/>
    </location>
    <ligand>
        <name>(6S)-5,6,7,8-tetrahydrofolate</name>
        <dbReference type="ChEBI" id="CHEBI:57453"/>
    </ligand>
</feature>
<dbReference type="EC" id="2.1.2.9" evidence="1"/>
<dbReference type="EMBL" id="CP000264">
    <property type="protein sequence ID" value="ABD53386.1"/>
    <property type="molecule type" value="Genomic_DNA"/>
</dbReference>
<dbReference type="RefSeq" id="WP_011453595.1">
    <property type="nucleotide sequence ID" value="NC_007802.1"/>
</dbReference>
<dbReference type="SMR" id="Q28V76"/>
<dbReference type="STRING" id="290400.Jann_0469"/>
<dbReference type="KEGG" id="jan:Jann_0469"/>
<dbReference type="eggNOG" id="COG0223">
    <property type="taxonomic scope" value="Bacteria"/>
</dbReference>
<dbReference type="HOGENOM" id="CLU_033347_1_2_5"/>
<dbReference type="OrthoDB" id="9802815at2"/>
<dbReference type="Proteomes" id="UP000008326">
    <property type="component" value="Chromosome"/>
</dbReference>
<dbReference type="GO" id="GO:0005829">
    <property type="term" value="C:cytosol"/>
    <property type="evidence" value="ECO:0007669"/>
    <property type="project" value="TreeGrafter"/>
</dbReference>
<dbReference type="GO" id="GO:0004479">
    <property type="term" value="F:methionyl-tRNA formyltransferase activity"/>
    <property type="evidence" value="ECO:0007669"/>
    <property type="project" value="UniProtKB-UniRule"/>
</dbReference>
<dbReference type="CDD" id="cd08646">
    <property type="entry name" value="FMT_core_Met-tRNA-FMT_N"/>
    <property type="match status" value="1"/>
</dbReference>
<dbReference type="CDD" id="cd08704">
    <property type="entry name" value="Met_tRNA_FMT_C"/>
    <property type="match status" value="1"/>
</dbReference>
<dbReference type="FunFam" id="3.40.50.12230:FF:000001">
    <property type="entry name" value="Methionyl-tRNA formyltransferase"/>
    <property type="match status" value="1"/>
</dbReference>
<dbReference type="Gene3D" id="3.40.50.12230">
    <property type="match status" value="1"/>
</dbReference>
<dbReference type="HAMAP" id="MF_00182">
    <property type="entry name" value="Formyl_trans"/>
    <property type="match status" value="1"/>
</dbReference>
<dbReference type="InterPro" id="IPR005794">
    <property type="entry name" value="Fmt"/>
</dbReference>
<dbReference type="InterPro" id="IPR005793">
    <property type="entry name" value="Formyl_trans_C"/>
</dbReference>
<dbReference type="InterPro" id="IPR002376">
    <property type="entry name" value="Formyl_transf_N"/>
</dbReference>
<dbReference type="InterPro" id="IPR036477">
    <property type="entry name" value="Formyl_transf_N_sf"/>
</dbReference>
<dbReference type="InterPro" id="IPR011034">
    <property type="entry name" value="Formyl_transferase-like_C_sf"/>
</dbReference>
<dbReference type="InterPro" id="IPR001555">
    <property type="entry name" value="GART_AS"/>
</dbReference>
<dbReference type="InterPro" id="IPR044135">
    <property type="entry name" value="Met-tRNA-FMT_C"/>
</dbReference>
<dbReference type="InterPro" id="IPR041711">
    <property type="entry name" value="Met-tRNA-FMT_N"/>
</dbReference>
<dbReference type="NCBIfam" id="TIGR00460">
    <property type="entry name" value="fmt"/>
    <property type="match status" value="1"/>
</dbReference>
<dbReference type="PANTHER" id="PTHR11138">
    <property type="entry name" value="METHIONYL-TRNA FORMYLTRANSFERASE"/>
    <property type="match status" value="1"/>
</dbReference>
<dbReference type="PANTHER" id="PTHR11138:SF5">
    <property type="entry name" value="METHIONYL-TRNA FORMYLTRANSFERASE, MITOCHONDRIAL"/>
    <property type="match status" value="1"/>
</dbReference>
<dbReference type="Pfam" id="PF02911">
    <property type="entry name" value="Formyl_trans_C"/>
    <property type="match status" value="1"/>
</dbReference>
<dbReference type="Pfam" id="PF00551">
    <property type="entry name" value="Formyl_trans_N"/>
    <property type="match status" value="1"/>
</dbReference>
<dbReference type="SUPFAM" id="SSF50486">
    <property type="entry name" value="FMT C-terminal domain-like"/>
    <property type="match status" value="1"/>
</dbReference>
<dbReference type="SUPFAM" id="SSF53328">
    <property type="entry name" value="Formyltransferase"/>
    <property type="match status" value="1"/>
</dbReference>
<dbReference type="PROSITE" id="PS00373">
    <property type="entry name" value="GART"/>
    <property type="match status" value="1"/>
</dbReference>
<gene>
    <name evidence="1" type="primary">fmt</name>
    <name type="ordered locus">Jann_0469</name>
</gene>
<accession>Q28V76</accession>
<protein>
    <recommendedName>
        <fullName evidence="1">Methionyl-tRNA formyltransferase</fullName>
        <ecNumber evidence="1">2.1.2.9</ecNumber>
    </recommendedName>
</protein>
<name>FMT_JANSC</name>
<proteinExistence type="inferred from homology"/>
<sequence length="301" mass="31670">MRIIFMGTPDFSVPVLDALVAAEHEVVAVYSQPPRPAGRGKRDRPSPVQARAETLGLTVRNPVSLKSTEEQSALADLNADVAVVVAYGLILPQAVLDAPARGCLNIHASLLPRWRGAAPIHRAIMAGDTMTGVCIMQMEAGLDTGPVLLRRETSIGAEDTTGTLHDRLSAIGAKAIVDALSQLDELTPKPQPDDGVTYATKIDKSEAKVDWTAPAPHINRQILGLSPFPGAWTMAGGKRLKLLQSRVANGTGALGEVLHGLTVACGDGAVEISRVQPEGKGAMDAKDWLLGARIAPGTVLE</sequence>
<evidence type="ECO:0000255" key="1">
    <source>
        <dbReference type="HAMAP-Rule" id="MF_00182"/>
    </source>
</evidence>
<comment type="function">
    <text evidence="1">Attaches a formyl group to the free amino group of methionyl-tRNA(fMet). The formyl group appears to play a dual role in the initiator identity of N-formylmethionyl-tRNA by promoting its recognition by IF2 and preventing the misappropriation of this tRNA by the elongation apparatus.</text>
</comment>
<comment type="catalytic activity">
    <reaction evidence="1">
        <text>L-methionyl-tRNA(fMet) + (6R)-10-formyltetrahydrofolate = N-formyl-L-methionyl-tRNA(fMet) + (6S)-5,6,7,8-tetrahydrofolate + H(+)</text>
        <dbReference type="Rhea" id="RHEA:24380"/>
        <dbReference type="Rhea" id="RHEA-COMP:9952"/>
        <dbReference type="Rhea" id="RHEA-COMP:9953"/>
        <dbReference type="ChEBI" id="CHEBI:15378"/>
        <dbReference type="ChEBI" id="CHEBI:57453"/>
        <dbReference type="ChEBI" id="CHEBI:78530"/>
        <dbReference type="ChEBI" id="CHEBI:78844"/>
        <dbReference type="ChEBI" id="CHEBI:195366"/>
        <dbReference type="EC" id="2.1.2.9"/>
    </reaction>
</comment>
<comment type="similarity">
    <text evidence="1">Belongs to the Fmt family.</text>
</comment>
<organism>
    <name type="scientific">Jannaschia sp. (strain CCS1)</name>
    <dbReference type="NCBI Taxonomy" id="290400"/>
    <lineage>
        <taxon>Bacteria</taxon>
        <taxon>Pseudomonadati</taxon>
        <taxon>Pseudomonadota</taxon>
        <taxon>Alphaproteobacteria</taxon>
        <taxon>Rhodobacterales</taxon>
        <taxon>Roseobacteraceae</taxon>
        <taxon>Jannaschia</taxon>
    </lineage>
</organism>
<keyword id="KW-0648">Protein biosynthesis</keyword>
<keyword id="KW-1185">Reference proteome</keyword>
<keyword id="KW-0808">Transferase</keyword>